<comment type="function">
    <text evidence="1">Protein S19 forms a complex with S13 that binds strongly to the 16S ribosomal RNA.</text>
</comment>
<comment type="similarity">
    <text evidence="1">Belongs to the universal ribosomal protein uS19 family.</text>
</comment>
<accession>Q2L2E7</accession>
<proteinExistence type="inferred from homology"/>
<name>RS19_BORA1</name>
<evidence type="ECO:0000255" key="1">
    <source>
        <dbReference type="HAMAP-Rule" id="MF_00531"/>
    </source>
</evidence>
<evidence type="ECO:0000305" key="2"/>
<protein>
    <recommendedName>
        <fullName evidence="1">Small ribosomal subunit protein uS19</fullName>
    </recommendedName>
    <alternativeName>
        <fullName evidence="2">30S ribosomal protein S19</fullName>
    </alternativeName>
</protein>
<sequence length="91" mass="10161">MSRSIKKGPFVDAHLTKKVEAAVAGKDKKPIKTWSRRSTILPEFIGLTIAVHNGRQHVPVYINENMVGHKLGEFALTRTFKGHAADKKAKR</sequence>
<organism>
    <name type="scientific">Bordetella avium (strain 197N)</name>
    <dbReference type="NCBI Taxonomy" id="360910"/>
    <lineage>
        <taxon>Bacteria</taxon>
        <taxon>Pseudomonadati</taxon>
        <taxon>Pseudomonadota</taxon>
        <taxon>Betaproteobacteria</taxon>
        <taxon>Burkholderiales</taxon>
        <taxon>Alcaligenaceae</taxon>
        <taxon>Bordetella</taxon>
    </lineage>
</organism>
<feature type="chain" id="PRO_0000265331" description="Small ribosomal subunit protein uS19">
    <location>
        <begin position="1"/>
        <end position="91"/>
    </location>
</feature>
<dbReference type="EMBL" id="AM167904">
    <property type="protein sequence ID" value="CAJ47613.1"/>
    <property type="molecule type" value="Genomic_DNA"/>
</dbReference>
<dbReference type="RefSeq" id="WP_012415737.1">
    <property type="nucleotide sequence ID" value="NC_010645.1"/>
</dbReference>
<dbReference type="SMR" id="Q2L2E7"/>
<dbReference type="STRING" id="360910.BAV0029"/>
<dbReference type="GeneID" id="92936726"/>
<dbReference type="KEGG" id="bav:BAV0029"/>
<dbReference type="eggNOG" id="COG0185">
    <property type="taxonomic scope" value="Bacteria"/>
</dbReference>
<dbReference type="HOGENOM" id="CLU_144911_0_1_4"/>
<dbReference type="OrthoDB" id="9797833at2"/>
<dbReference type="Proteomes" id="UP000001977">
    <property type="component" value="Chromosome"/>
</dbReference>
<dbReference type="GO" id="GO:0005737">
    <property type="term" value="C:cytoplasm"/>
    <property type="evidence" value="ECO:0007669"/>
    <property type="project" value="UniProtKB-ARBA"/>
</dbReference>
<dbReference type="GO" id="GO:0015935">
    <property type="term" value="C:small ribosomal subunit"/>
    <property type="evidence" value="ECO:0007669"/>
    <property type="project" value="InterPro"/>
</dbReference>
<dbReference type="GO" id="GO:0019843">
    <property type="term" value="F:rRNA binding"/>
    <property type="evidence" value="ECO:0007669"/>
    <property type="project" value="UniProtKB-UniRule"/>
</dbReference>
<dbReference type="GO" id="GO:0003735">
    <property type="term" value="F:structural constituent of ribosome"/>
    <property type="evidence" value="ECO:0007669"/>
    <property type="project" value="InterPro"/>
</dbReference>
<dbReference type="GO" id="GO:0000028">
    <property type="term" value="P:ribosomal small subunit assembly"/>
    <property type="evidence" value="ECO:0007669"/>
    <property type="project" value="TreeGrafter"/>
</dbReference>
<dbReference type="GO" id="GO:0006412">
    <property type="term" value="P:translation"/>
    <property type="evidence" value="ECO:0007669"/>
    <property type="project" value="UniProtKB-UniRule"/>
</dbReference>
<dbReference type="FunFam" id="3.30.860.10:FF:000001">
    <property type="entry name" value="30S ribosomal protein S19"/>
    <property type="match status" value="1"/>
</dbReference>
<dbReference type="Gene3D" id="3.30.860.10">
    <property type="entry name" value="30s Ribosomal Protein S19, Chain A"/>
    <property type="match status" value="1"/>
</dbReference>
<dbReference type="HAMAP" id="MF_00531">
    <property type="entry name" value="Ribosomal_uS19"/>
    <property type="match status" value="1"/>
</dbReference>
<dbReference type="InterPro" id="IPR002222">
    <property type="entry name" value="Ribosomal_uS19"/>
</dbReference>
<dbReference type="InterPro" id="IPR005732">
    <property type="entry name" value="Ribosomal_uS19_bac-type"/>
</dbReference>
<dbReference type="InterPro" id="IPR020934">
    <property type="entry name" value="Ribosomal_uS19_CS"/>
</dbReference>
<dbReference type="InterPro" id="IPR023575">
    <property type="entry name" value="Ribosomal_uS19_SF"/>
</dbReference>
<dbReference type="NCBIfam" id="TIGR01050">
    <property type="entry name" value="rpsS_bact"/>
    <property type="match status" value="1"/>
</dbReference>
<dbReference type="PANTHER" id="PTHR11880">
    <property type="entry name" value="RIBOSOMAL PROTEIN S19P FAMILY MEMBER"/>
    <property type="match status" value="1"/>
</dbReference>
<dbReference type="PANTHER" id="PTHR11880:SF8">
    <property type="entry name" value="SMALL RIBOSOMAL SUBUNIT PROTEIN US19M"/>
    <property type="match status" value="1"/>
</dbReference>
<dbReference type="Pfam" id="PF00203">
    <property type="entry name" value="Ribosomal_S19"/>
    <property type="match status" value="1"/>
</dbReference>
<dbReference type="PIRSF" id="PIRSF002144">
    <property type="entry name" value="Ribosomal_S19"/>
    <property type="match status" value="1"/>
</dbReference>
<dbReference type="PRINTS" id="PR00975">
    <property type="entry name" value="RIBOSOMALS19"/>
</dbReference>
<dbReference type="SUPFAM" id="SSF54570">
    <property type="entry name" value="Ribosomal protein S19"/>
    <property type="match status" value="1"/>
</dbReference>
<dbReference type="PROSITE" id="PS00323">
    <property type="entry name" value="RIBOSOMAL_S19"/>
    <property type="match status" value="1"/>
</dbReference>
<gene>
    <name evidence="1" type="primary">rpsS</name>
    <name type="ordered locus">BAV0029</name>
</gene>
<reference key="1">
    <citation type="journal article" date="2006" name="J. Bacteriol.">
        <title>Comparison of the genome sequence of the poultry pathogen Bordetella avium with those of B. bronchiseptica, B. pertussis, and B. parapertussis reveals extensive diversity in surface structures associated with host interaction.</title>
        <authorList>
            <person name="Sebaihia M."/>
            <person name="Preston A."/>
            <person name="Maskell D.J."/>
            <person name="Kuzmiak H."/>
            <person name="Connell T.D."/>
            <person name="King N.D."/>
            <person name="Orndorff P.E."/>
            <person name="Miyamoto D.M."/>
            <person name="Thomson N.R."/>
            <person name="Harris D."/>
            <person name="Goble A."/>
            <person name="Lord A."/>
            <person name="Murphy L."/>
            <person name="Quail M.A."/>
            <person name="Rutter S."/>
            <person name="Squares R."/>
            <person name="Squares S."/>
            <person name="Woodward J."/>
            <person name="Parkhill J."/>
            <person name="Temple L.M."/>
        </authorList>
    </citation>
    <scope>NUCLEOTIDE SEQUENCE [LARGE SCALE GENOMIC DNA]</scope>
    <source>
        <strain>197N</strain>
    </source>
</reference>
<keyword id="KW-1185">Reference proteome</keyword>
<keyword id="KW-0687">Ribonucleoprotein</keyword>
<keyword id="KW-0689">Ribosomal protein</keyword>
<keyword id="KW-0694">RNA-binding</keyword>
<keyword id="KW-0699">rRNA-binding</keyword>